<name>TM269_MOUSE</name>
<reference key="1">
    <citation type="journal article" date="2005" name="Science">
        <title>The transcriptional landscape of the mammalian genome.</title>
        <authorList>
            <person name="Carninci P."/>
            <person name="Kasukawa T."/>
            <person name="Katayama S."/>
            <person name="Gough J."/>
            <person name="Frith M.C."/>
            <person name="Maeda N."/>
            <person name="Oyama R."/>
            <person name="Ravasi T."/>
            <person name="Lenhard B."/>
            <person name="Wells C."/>
            <person name="Kodzius R."/>
            <person name="Shimokawa K."/>
            <person name="Bajic V.B."/>
            <person name="Brenner S.E."/>
            <person name="Batalov S."/>
            <person name="Forrest A.R."/>
            <person name="Zavolan M."/>
            <person name="Davis M.J."/>
            <person name="Wilming L.G."/>
            <person name="Aidinis V."/>
            <person name="Allen J.E."/>
            <person name="Ambesi-Impiombato A."/>
            <person name="Apweiler R."/>
            <person name="Aturaliya R.N."/>
            <person name="Bailey T.L."/>
            <person name="Bansal M."/>
            <person name="Baxter L."/>
            <person name="Beisel K.W."/>
            <person name="Bersano T."/>
            <person name="Bono H."/>
            <person name="Chalk A.M."/>
            <person name="Chiu K.P."/>
            <person name="Choudhary V."/>
            <person name="Christoffels A."/>
            <person name="Clutterbuck D.R."/>
            <person name="Crowe M.L."/>
            <person name="Dalla E."/>
            <person name="Dalrymple B.P."/>
            <person name="de Bono B."/>
            <person name="Della Gatta G."/>
            <person name="di Bernardo D."/>
            <person name="Down T."/>
            <person name="Engstrom P."/>
            <person name="Fagiolini M."/>
            <person name="Faulkner G."/>
            <person name="Fletcher C.F."/>
            <person name="Fukushima T."/>
            <person name="Furuno M."/>
            <person name="Futaki S."/>
            <person name="Gariboldi M."/>
            <person name="Georgii-Hemming P."/>
            <person name="Gingeras T.R."/>
            <person name="Gojobori T."/>
            <person name="Green R.E."/>
            <person name="Gustincich S."/>
            <person name="Harbers M."/>
            <person name="Hayashi Y."/>
            <person name="Hensch T.K."/>
            <person name="Hirokawa N."/>
            <person name="Hill D."/>
            <person name="Huminiecki L."/>
            <person name="Iacono M."/>
            <person name="Ikeo K."/>
            <person name="Iwama A."/>
            <person name="Ishikawa T."/>
            <person name="Jakt M."/>
            <person name="Kanapin A."/>
            <person name="Katoh M."/>
            <person name="Kawasawa Y."/>
            <person name="Kelso J."/>
            <person name="Kitamura H."/>
            <person name="Kitano H."/>
            <person name="Kollias G."/>
            <person name="Krishnan S.P."/>
            <person name="Kruger A."/>
            <person name="Kummerfeld S.K."/>
            <person name="Kurochkin I.V."/>
            <person name="Lareau L.F."/>
            <person name="Lazarevic D."/>
            <person name="Lipovich L."/>
            <person name="Liu J."/>
            <person name="Liuni S."/>
            <person name="McWilliam S."/>
            <person name="Madan Babu M."/>
            <person name="Madera M."/>
            <person name="Marchionni L."/>
            <person name="Matsuda H."/>
            <person name="Matsuzawa S."/>
            <person name="Miki H."/>
            <person name="Mignone F."/>
            <person name="Miyake S."/>
            <person name="Morris K."/>
            <person name="Mottagui-Tabar S."/>
            <person name="Mulder N."/>
            <person name="Nakano N."/>
            <person name="Nakauchi H."/>
            <person name="Ng P."/>
            <person name="Nilsson R."/>
            <person name="Nishiguchi S."/>
            <person name="Nishikawa S."/>
            <person name="Nori F."/>
            <person name="Ohara O."/>
            <person name="Okazaki Y."/>
            <person name="Orlando V."/>
            <person name="Pang K.C."/>
            <person name="Pavan W.J."/>
            <person name="Pavesi G."/>
            <person name="Pesole G."/>
            <person name="Petrovsky N."/>
            <person name="Piazza S."/>
            <person name="Reed J."/>
            <person name="Reid J.F."/>
            <person name="Ring B.Z."/>
            <person name="Ringwald M."/>
            <person name="Rost B."/>
            <person name="Ruan Y."/>
            <person name="Salzberg S.L."/>
            <person name="Sandelin A."/>
            <person name="Schneider C."/>
            <person name="Schoenbach C."/>
            <person name="Sekiguchi K."/>
            <person name="Semple C.A."/>
            <person name="Seno S."/>
            <person name="Sessa L."/>
            <person name="Sheng Y."/>
            <person name="Shibata Y."/>
            <person name="Shimada H."/>
            <person name="Shimada K."/>
            <person name="Silva D."/>
            <person name="Sinclair B."/>
            <person name="Sperling S."/>
            <person name="Stupka E."/>
            <person name="Sugiura K."/>
            <person name="Sultana R."/>
            <person name="Takenaka Y."/>
            <person name="Taki K."/>
            <person name="Tammoja K."/>
            <person name="Tan S.L."/>
            <person name="Tang S."/>
            <person name="Taylor M.S."/>
            <person name="Tegner J."/>
            <person name="Teichmann S.A."/>
            <person name="Ueda H.R."/>
            <person name="van Nimwegen E."/>
            <person name="Verardo R."/>
            <person name="Wei C.L."/>
            <person name="Yagi K."/>
            <person name="Yamanishi H."/>
            <person name="Zabarovsky E."/>
            <person name="Zhu S."/>
            <person name="Zimmer A."/>
            <person name="Hide W."/>
            <person name="Bult C."/>
            <person name="Grimmond S.M."/>
            <person name="Teasdale R.D."/>
            <person name="Liu E.T."/>
            <person name="Brusic V."/>
            <person name="Quackenbush J."/>
            <person name="Wahlestedt C."/>
            <person name="Mattick J.S."/>
            <person name="Hume D.A."/>
            <person name="Kai C."/>
            <person name="Sasaki D."/>
            <person name="Tomaru Y."/>
            <person name="Fukuda S."/>
            <person name="Kanamori-Katayama M."/>
            <person name="Suzuki M."/>
            <person name="Aoki J."/>
            <person name="Arakawa T."/>
            <person name="Iida J."/>
            <person name="Imamura K."/>
            <person name="Itoh M."/>
            <person name="Kato T."/>
            <person name="Kawaji H."/>
            <person name="Kawagashira N."/>
            <person name="Kawashima T."/>
            <person name="Kojima M."/>
            <person name="Kondo S."/>
            <person name="Konno H."/>
            <person name="Nakano K."/>
            <person name="Ninomiya N."/>
            <person name="Nishio T."/>
            <person name="Okada M."/>
            <person name="Plessy C."/>
            <person name="Shibata K."/>
            <person name="Shiraki T."/>
            <person name="Suzuki S."/>
            <person name="Tagami M."/>
            <person name="Waki K."/>
            <person name="Watahiki A."/>
            <person name="Okamura-Oho Y."/>
            <person name="Suzuki H."/>
            <person name="Kawai J."/>
            <person name="Hayashizaki Y."/>
        </authorList>
    </citation>
    <scope>NUCLEOTIDE SEQUENCE [LARGE SCALE MRNA]</scope>
</reference>
<reference key="2">
    <citation type="journal article" date="2009" name="PLoS Biol.">
        <title>Lineage-specific biology revealed by a finished genome assembly of the mouse.</title>
        <authorList>
            <person name="Church D.M."/>
            <person name="Goodstadt L."/>
            <person name="Hillier L.W."/>
            <person name="Zody M.C."/>
            <person name="Goldstein S."/>
            <person name="She X."/>
            <person name="Bult C.J."/>
            <person name="Agarwala R."/>
            <person name="Cherry J.L."/>
            <person name="DiCuccio M."/>
            <person name="Hlavina W."/>
            <person name="Kapustin Y."/>
            <person name="Meric P."/>
            <person name="Maglott D."/>
            <person name="Birtle Z."/>
            <person name="Marques A.C."/>
            <person name="Graves T."/>
            <person name="Zhou S."/>
            <person name="Teague B."/>
            <person name="Potamousis K."/>
            <person name="Churas C."/>
            <person name="Place M."/>
            <person name="Herschleb J."/>
            <person name="Runnheim R."/>
            <person name="Forrest D."/>
            <person name="Amos-Landgraf J."/>
            <person name="Schwartz D.C."/>
            <person name="Cheng Z."/>
            <person name="Lindblad-Toh K."/>
            <person name="Eichler E.E."/>
            <person name="Ponting C.P."/>
        </authorList>
    </citation>
    <scope>NUCLEOTIDE SEQUENCE [LARGE SCALE GENOMIC DNA]</scope>
    <source>
        <strain>C57BL/6J</strain>
    </source>
</reference>
<sequence>MLGTGDPNLHSSCILSRKKGRQGHHIMKHEQIGSQMTEFSWKDIINALALANMILGLFSIFCSFSRKSYCASWMLLISFLLDIAIGTMTKHLNIPHKLGLELNDFAIFTTFGLASALLLGVDGPLNGFLAIIYVLTTSFRMCFYSTGGATSGYKGLPCPYASCVLASTCLLTKGNTFILCCMASLMILFMIDQSCYPHDEILDSDNWKKIVYIGGVILLFFSPFPLTAFYCLTWSLSYIFSPETLWGRGVRIKP</sequence>
<evidence type="ECO:0000255" key="1"/>
<evidence type="ECO:0000312" key="2">
    <source>
        <dbReference type="MGI" id="MGI:1922430"/>
    </source>
</evidence>
<dbReference type="EMBL" id="AK015991">
    <property type="protein sequence ID" value="BAB30070.1"/>
    <property type="molecule type" value="mRNA"/>
</dbReference>
<dbReference type="EMBL" id="AK053970">
    <property type="protein sequence ID" value="BAC35606.1"/>
    <property type="molecule type" value="mRNA"/>
</dbReference>
<dbReference type="EMBL" id="AL606975">
    <property type="status" value="NOT_ANNOTATED_CDS"/>
    <property type="molecule type" value="Genomic_DNA"/>
</dbReference>
<dbReference type="CCDS" id="CCDS18574.1"/>
<dbReference type="RefSeq" id="NP_083474.1">
    <property type="nucleotide sequence ID" value="NM_029198.3"/>
</dbReference>
<dbReference type="RefSeq" id="XP_036020404.1">
    <property type="nucleotide sequence ID" value="XM_036164511.1"/>
</dbReference>
<dbReference type="SMR" id="Q9D4Y8"/>
<dbReference type="STRING" id="10090.ENSMUSP00000148286"/>
<dbReference type="PaxDb" id="10090-ENSMUSP00000030394"/>
<dbReference type="Ensembl" id="ENSMUST00000212054.2">
    <property type="protein sequence ID" value="ENSMUSP00000148286.2"/>
    <property type="gene ID" value="ENSMUSG00000028642.8"/>
</dbReference>
<dbReference type="GeneID" id="75180"/>
<dbReference type="KEGG" id="mmu:75180"/>
<dbReference type="UCSC" id="uc008ulm.1">
    <property type="organism name" value="mouse"/>
</dbReference>
<dbReference type="AGR" id="MGI:1922430"/>
<dbReference type="CTD" id="100129924"/>
<dbReference type="MGI" id="MGI:1922430">
    <property type="gene designation" value="Tmem269"/>
</dbReference>
<dbReference type="VEuPathDB" id="HostDB:ENSMUSG00000028642"/>
<dbReference type="eggNOG" id="ENOG502QRZI">
    <property type="taxonomic scope" value="Eukaryota"/>
</dbReference>
<dbReference type="GeneTree" id="ENSGT00940000154169"/>
<dbReference type="HOGENOM" id="CLU_081147_0_0_1"/>
<dbReference type="InParanoid" id="Q9D4Y8"/>
<dbReference type="OMA" id="YKGLPCR"/>
<dbReference type="OrthoDB" id="448573at2759"/>
<dbReference type="PhylomeDB" id="Q9D4Y8"/>
<dbReference type="TreeFam" id="TF332358"/>
<dbReference type="BioGRID-ORCS" id="75180">
    <property type="hits" value="3 hits in 74 CRISPR screens"/>
</dbReference>
<dbReference type="ChiTaRS" id="Tmem269">
    <property type="organism name" value="mouse"/>
</dbReference>
<dbReference type="PRO" id="PR:Q9D4Y8"/>
<dbReference type="Proteomes" id="UP000000589">
    <property type="component" value="Chromosome 4"/>
</dbReference>
<dbReference type="RNAct" id="Q9D4Y8">
    <property type="molecule type" value="protein"/>
</dbReference>
<dbReference type="Bgee" id="ENSMUSG00000028642">
    <property type="expression patterns" value="Expressed in testis and 31 other cell types or tissues"/>
</dbReference>
<dbReference type="ExpressionAtlas" id="Q9D4Y8">
    <property type="expression patterns" value="baseline and differential"/>
</dbReference>
<dbReference type="GO" id="GO:0016020">
    <property type="term" value="C:membrane"/>
    <property type="evidence" value="ECO:0007669"/>
    <property type="project" value="UniProtKB-SubCell"/>
</dbReference>
<protein>
    <recommendedName>
        <fullName evidence="2">Transmembrane protein 269</fullName>
    </recommendedName>
</protein>
<feature type="chain" id="PRO_0000440586" description="Transmembrane protein 269">
    <location>
        <begin position="1"/>
        <end position="254"/>
    </location>
</feature>
<feature type="transmembrane region" description="Helical" evidence="1">
    <location>
        <begin position="44"/>
        <end position="64"/>
    </location>
</feature>
<feature type="transmembrane region" description="Helical" evidence="1">
    <location>
        <begin position="69"/>
        <end position="89"/>
    </location>
</feature>
<feature type="transmembrane region" description="Helical" evidence="1">
    <location>
        <begin position="113"/>
        <end position="135"/>
    </location>
</feature>
<feature type="transmembrane region" description="Helical" evidence="1">
    <location>
        <begin position="171"/>
        <end position="191"/>
    </location>
</feature>
<feature type="transmembrane region" description="Helical" evidence="1">
    <location>
        <begin position="210"/>
        <end position="230"/>
    </location>
</feature>
<proteinExistence type="evidence at transcript level"/>
<keyword id="KW-0472">Membrane</keyword>
<keyword id="KW-1185">Reference proteome</keyword>
<keyword id="KW-0812">Transmembrane</keyword>
<keyword id="KW-1133">Transmembrane helix</keyword>
<comment type="subcellular location">
    <subcellularLocation>
        <location evidence="1">Membrane</location>
        <topology evidence="1">Multi-pass membrane protein</topology>
    </subcellularLocation>
</comment>
<accession>Q9D4Y8</accession>
<organism>
    <name type="scientific">Mus musculus</name>
    <name type="common">Mouse</name>
    <dbReference type="NCBI Taxonomy" id="10090"/>
    <lineage>
        <taxon>Eukaryota</taxon>
        <taxon>Metazoa</taxon>
        <taxon>Chordata</taxon>
        <taxon>Craniata</taxon>
        <taxon>Vertebrata</taxon>
        <taxon>Euteleostomi</taxon>
        <taxon>Mammalia</taxon>
        <taxon>Eutheria</taxon>
        <taxon>Euarchontoglires</taxon>
        <taxon>Glires</taxon>
        <taxon>Rodentia</taxon>
        <taxon>Myomorpha</taxon>
        <taxon>Muroidea</taxon>
        <taxon>Muridae</taxon>
        <taxon>Murinae</taxon>
        <taxon>Mus</taxon>
        <taxon>Mus</taxon>
    </lineage>
</organism>
<gene>
    <name evidence="2" type="primary">Tmem269</name>
</gene>